<evidence type="ECO:0000255" key="1">
    <source>
        <dbReference type="HAMAP-Rule" id="MF_00019"/>
    </source>
</evidence>
<comment type="function">
    <text evidence="1">Catalyzes the reversible formation of acyl-phosphate (acyl-PO(4)) from acyl-[acyl-carrier-protein] (acyl-ACP). This enzyme utilizes acyl-ACP as fatty acyl donor, but not acyl-CoA.</text>
</comment>
<comment type="catalytic activity">
    <reaction evidence="1">
        <text>a fatty acyl-[ACP] + phosphate = an acyl phosphate + holo-[ACP]</text>
        <dbReference type="Rhea" id="RHEA:42292"/>
        <dbReference type="Rhea" id="RHEA-COMP:9685"/>
        <dbReference type="Rhea" id="RHEA-COMP:14125"/>
        <dbReference type="ChEBI" id="CHEBI:43474"/>
        <dbReference type="ChEBI" id="CHEBI:59918"/>
        <dbReference type="ChEBI" id="CHEBI:64479"/>
        <dbReference type="ChEBI" id="CHEBI:138651"/>
        <dbReference type="EC" id="2.3.1.274"/>
    </reaction>
</comment>
<comment type="pathway">
    <text evidence="1">Lipid metabolism; phospholipid metabolism.</text>
</comment>
<comment type="subunit">
    <text evidence="1">Homodimer. Probably interacts with PlsY.</text>
</comment>
<comment type="subcellular location">
    <subcellularLocation>
        <location evidence="1">Cytoplasm</location>
    </subcellularLocation>
    <text evidence="1">Associated with the membrane possibly through PlsY.</text>
</comment>
<comment type="similarity">
    <text evidence="1">Belongs to the PlsX family.</text>
</comment>
<keyword id="KW-0963">Cytoplasm</keyword>
<keyword id="KW-0444">Lipid biosynthesis</keyword>
<keyword id="KW-0443">Lipid metabolism</keyword>
<keyword id="KW-0594">Phospholipid biosynthesis</keyword>
<keyword id="KW-1208">Phospholipid metabolism</keyword>
<keyword id="KW-0808">Transferase</keyword>
<name>PLSX_CALS8</name>
<dbReference type="EC" id="2.3.1.274" evidence="1"/>
<dbReference type="EMBL" id="CP000679">
    <property type="protein sequence ID" value="ABP67194.1"/>
    <property type="molecule type" value="Genomic_DNA"/>
</dbReference>
<dbReference type="RefSeq" id="WP_011917130.1">
    <property type="nucleotide sequence ID" value="NC_009437.1"/>
</dbReference>
<dbReference type="SMR" id="A4XJV9"/>
<dbReference type="STRING" id="351627.Csac_1602"/>
<dbReference type="KEGG" id="csc:Csac_1602"/>
<dbReference type="eggNOG" id="COG0416">
    <property type="taxonomic scope" value="Bacteria"/>
</dbReference>
<dbReference type="HOGENOM" id="CLU_039379_1_1_9"/>
<dbReference type="OrthoDB" id="9806408at2"/>
<dbReference type="UniPathway" id="UPA00085"/>
<dbReference type="Proteomes" id="UP000000256">
    <property type="component" value="Chromosome"/>
</dbReference>
<dbReference type="GO" id="GO:0005737">
    <property type="term" value="C:cytoplasm"/>
    <property type="evidence" value="ECO:0007669"/>
    <property type="project" value="UniProtKB-SubCell"/>
</dbReference>
<dbReference type="GO" id="GO:0043811">
    <property type="term" value="F:phosphate:acyl-[acyl carrier protein] acyltransferase activity"/>
    <property type="evidence" value="ECO:0007669"/>
    <property type="project" value="UniProtKB-UniRule"/>
</dbReference>
<dbReference type="GO" id="GO:0006633">
    <property type="term" value="P:fatty acid biosynthetic process"/>
    <property type="evidence" value="ECO:0007669"/>
    <property type="project" value="UniProtKB-UniRule"/>
</dbReference>
<dbReference type="GO" id="GO:0008654">
    <property type="term" value="P:phospholipid biosynthetic process"/>
    <property type="evidence" value="ECO:0007669"/>
    <property type="project" value="UniProtKB-KW"/>
</dbReference>
<dbReference type="Gene3D" id="3.40.718.10">
    <property type="entry name" value="Isopropylmalate Dehydrogenase"/>
    <property type="match status" value="1"/>
</dbReference>
<dbReference type="HAMAP" id="MF_00019">
    <property type="entry name" value="PlsX"/>
    <property type="match status" value="1"/>
</dbReference>
<dbReference type="InterPro" id="IPR003664">
    <property type="entry name" value="FA_synthesis"/>
</dbReference>
<dbReference type="InterPro" id="IPR012281">
    <property type="entry name" value="Phospholipid_synth_PlsX-like"/>
</dbReference>
<dbReference type="NCBIfam" id="TIGR00182">
    <property type="entry name" value="plsX"/>
    <property type="match status" value="1"/>
</dbReference>
<dbReference type="PANTHER" id="PTHR30100">
    <property type="entry name" value="FATTY ACID/PHOSPHOLIPID SYNTHESIS PROTEIN PLSX"/>
    <property type="match status" value="1"/>
</dbReference>
<dbReference type="PANTHER" id="PTHR30100:SF1">
    <property type="entry name" value="PHOSPHATE ACYLTRANSFERASE"/>
    <property type="match status" value="1"/>
</dbReference>
<dbReference type="Pfam" id="PF02504">
    <property type="entry name" value="FA_synthesis"/>
    <property type="match status" value="1"/>
</dbReference>
<dbReference type="PIRSF" id="PIRSF002465">
    <property type="entry name" value="Phsphlp_syn_PlsX"/>
    <property type="match status" value="1"/>
</dbReference>
<dbReference type="SUPFAM" id="SSF53659">
    <property type="entry name" value="Isocitrate/Isopropylmalate dehydrogenase-like"/>
    <property type="match status" value="1"/>
</dbReference>
<sequence>MKIGIDTMGGDNAPSSVIEGVAIYLTQNTQDNVVLFGNKSVIEKECVDRIKDLSRVEIVDCKEKIEFDDEPVKAIRQKKDSSIVVGLKYLKEKQIDAFVSAGSTGALMAGGLLIVGRIKGIDRPALTTKLPYKSGQYLLIDVGSNTDCRPINILQFAQMATVYASKVLGKNNPTVGLLNIGTEETKGNDLSKQSYEILKNAKNINFVGNVEARDLPFSPPDIVVCDGFVGNIVLKLTEGFGLLFFDILKDIAKLSLKAKIGGLLLKPYLKNLKGKYDYKEVGGAPLLGIDGIVIKCHGSSDGQAIFNGINQAKTFYENNVLELLKEEITAESEV</sequence>
<feature type="chain" id="PRO_1000001739" description="Phosphate acyltransferase">
    <location>
        <begin position="1"/>
        <end position="334"/>
    </location>
</feature>
<protein>
    <recommendedName>
        <fullName evidence="1">Phosphate acyltransferase</fullName>
        <ecNumber evidence="1">2.3.1.274</ecNumber>
    </recommendedName>
    <alternativeName>
        <fullName evidence="1">Acyl-ACP phosphotransacylase</fullName>
    </alternativeName>
    <alternativeName>
        <fullName evidence="1">Acyl-[acyl-carrier-protein]--phosphate acyltransferase</fullName>
    </alternativeName>
    <alternativeName>
        <fullName evidence="1">Phosphate-acyl-ACP acyltransferase</fullName>
    </alternativeName>
</protein>
<proteinExistence type="inferred from homology"/>
<reference key="1">
    <citation type="submission" date="2007-04" db="EMBL/GenBank/DDBJ databases">
        <title>Genome sequence of the thermophilic hydrogen-producing bacterium Caldicellulosiruptor saccharolyticus DSM 8903.</title>
        <authorList>
            <person name="Copeland A."/>
            <person name="Lucas S."/>
            <person name="Lapidus A."/>
            <person name="Barry K."/>
            <person name="Detter J.C."/>
            <person name="Glavina del Rio T."/>
            <person name="Hammon N."/>
            <person name="Israni S."/>
            <person name="Dalin E."/>
            <person name="Tice H."/>
            <person name="Pitluck S."/>
            <person name="Kiss H."/>
            <person name="Brettin T."/>
            <person name="Bruce D."/>
            <person name="Han C."/>
            <person name="Schmutz J."/>
            <person name="Larimer F."/>
            <person name="Land M."/>
            <person name="Hauser L."/>
            <person name="Kyrpides N."/>
            <person name="Lykidis A."/>
            <person name="van de Werken H.J.G."/>
            <person name="Verhaart M.R.A."/>
            <person name="VanFossen A.L."/>
            <person name="Lewis D.L."/>
            <person name="Nichols J.D."/>
            <person name="Goorissen H.P."/>
            <person name="van Niel E.W.J."/>
            <person name="Stams F.J.M."/>
            <person name="Willquist K.U."/>
            <person name="Ward D.E."/>
            <person name="van der Oost J."/>
            <person name="Kelly R.M."/>
            <person name="Kengen S.M.W."/>
            <person name="Richardson P."/>
        </authorList>
    </citation>
    <scope>NUCLEOTIDE SEQUENCE [LARGE SCALE GENOMIC DNA]</scope>
    <source>
        <strain>ATCC 43494 / DSM 8903 / Tp8T 6331</strain>
    </source>
</reference>
<organism>
    <name type="scientific">Caldicellulosiruptor saccharolyticus (strain ATCC 43494 / DSM 8903 / Tp8T 6331)</name>
    <dbReference type="NCBI Taxonomy" id="351627"/>
    <lineage>
        <taxon>Bacteria</taxon>
        <taxon>Bacillati</taxon>
        <taxon>Bacillota</taxon>
        <taxon>Bacillota incertae sedis</taxon>
        <taxon>Caldicellulosiruptorales</taxon>
        <taxon>Caldicellulosiruptoraceae</taxon>
        <taxon>Caldicellulosiruptor</taxon>
    </lineage>
</organism>
<gene>
    <name evidence="1" type="primary">plsX</name>
    <name type="ordered locus">Csac_1602</name>
</gene>
<accession>A4XJV9</accession>